<comment type="function">
    <text evidence="1">NAD-binding protein involved in the addition of a carboxymethylaminomethyl (cmnm) group at the wobble position (U34) of certain tRNAs, forming tRNA-cmnm(5)s(2)U34.</text>
</comment>
<comment type="cofactor">
    <cofactor evidence="1">
        <name>FAD</name>
        <dbReference type="ChEBI" id="CHEBI:57692"/>
    </cofactor>
</comment>
<comment type="subunit">
    <text evidence="1">Homodimer. Heterotetramer of two MnmE and two MnmG subunits.</text>
</comment>
<comment type="subcellular location">
    <subcellularLocation>
        <location evidence="1">Cytoplasm</location>
    </subcellularLocation>
</comment>
<comment type="similarity">
    <text evidence="1">Belongs to the MnmG family.</text>
</comment>
<comment type="sequence caution" evidence="2">
    <conflict type="erroneous initiation">
        <sequence resource="EMBL-CDS" id="ABF05780"/>
    </conflict>
</comment>
<gene>
    <name evidence="1" type="primary">mnmG</name>
    <name evidence="1" type="synonym">gidA</name>
    <name type="ordered locus">SFV_3767</name>
</gene>
<proteinExistence type="inferred from homology"/>
<accession>Q0SYT5</accession>
<organism>
    <name type="scientific">Shigella flexneri serotype 5b (strain 8401)</name>
    <dbReference type="NCBI Taxonomy" id="373384"/>
    <lineage>
        <taxon>Bacteria</taxon>
        <taxon>Pseudomonadati</taxon>
        <taxon>Pseudomonadota</taxon>
        <taxon>Gammaproteobacteria</taxon>
        <taxon>Enterobacterales</taxon>
        <taxon>Enterobacteriaceae</taxon>
        <taxon>Shigella</taxon>
    </lineage>
</organism>
<evidence type="ECO:0000255" key="1">
    <source>
        <dbReference type="HAMAP-Rule" id="MF_00129"/>
    </source>
</evidence>
<evidence type="ECO:0000305" key="2"/>
<sequence length="629" mass="69563">MFYPDPFDVIIIGGGHAGTEAAMAAARMGQQTLLLTHNIDTLGQMSCNPAIGGIGKGHLVKEVDALGGLMAKAIDQAGIQFRILNASKGPAVRATRAQADRVRYRQAVRTALENQPNLMIFQQAVEDLIVENDRVVGAVTQMGLKFRAKAVVLTVGTFLDGKIHIGLDNYSGGRAGDPPSIPLSRRLRELPLRVGRLKTGTPPRIDARTIDFSVLAQQHGDNPMPVFSFMGNASLHPQQVPCYITHTNEKTHDVIRSNLDRSPMYAGVIEGVGPRYCPSIEDKVMRFADRNQHQIFLEPEGLTSNEIYPNGISTSLPFDVQMQIVRSMQGMENAKIVRPGYAIEYDFFDPRDLKPTLESKFIQGLFFAGQINGTTGYEEAAAQGLLAGLNAARLSADKEGWAPARSQAYLGVLVDDLCTLGTKEPYRMFTSRAEYRLMLREDNADLRLTEIGRELGLVDDERWARFNEKLENIERERQRLKSTWVTPSAEAAAEVNAHLTAPLSREASGEDLLRRPEMTYEKLTTLTPFAPALTDEQAAEQVEIQVKYEGYIARQQDEIEKQLRNENTLLPATLDYRQISGLSNEVIAKLNDHKPASIGQASRISGVTPAAISILLVWLKKQGMLRRSA</sequence>
<reference key="1">
    <citation type="journal article" date="2006" name="BMC Genomics">
        <title>Complete genome sequence of Shigella flexneri 5b and comparison with Shigella flexneri 2a.</title>
        <authorList>
            <person name="Nie H."/>
            <person name="Yang F."/>
            <person name="Zhang X."/>
            <person name="Yang J."/>
            <person name="Chen L."/>
            <person name="Wang J."/>
            <person name="Xiong Z."/>
            <person name="Peng J."/>
            <person name="Sun L."/>
            <person name="Dong J."/>
            <person name="Xue Y."/>
            <person name="Xu X."/>
            <person name="Chen S."/>
            <person name="Yao Z."/>
            <person name="Shen Y."/>
            <person name="Jin Q."/>
        </authorList>
    </citation>
    <scope>NUCLEOTIDE SEQUENCE [LARGE SCALE GENOMIC DNA]</scope>
    <source>
        <strain>8401</strain>
    </source>
</reference>
<dbReference type="EMBL" id="CP000266">
    <property type="protein sequence ID" value="ABF05780.1"/>
    <property type="status" value="ALT_INIT"/>
    <property type="molecule type" value="Genomic_DNA"/>
</dbReference>
<dbReference type="RefSeq" id="WP_000499813.1">
    <property type="nucleotide sequence ID" value="NC_008258.1"/>
</dbReference>
<dbReference type="SMR" id="Q0SYT5"/>
<dbReference type="KEGG" id="sfv:SFV_3767"/>
<dbReference type="HOGENOM" id="CLU_007831_2_2_6"/>
<dbReference type="Proteomes" id="UP000000659">
    <property type="component" value="Chromosome"/>
</dbReference>
<dbReference type="GO" id="GO:0005829">
    <property type="term" value="C:cytosol"/>
    <property type="evidence" value="ECO:0007669"/>
    <property type="project" value="TreeGrafter"/>
</dbReference>
<dbReference type="GO" id="GO:0050660">
    <property type="term" value="F:flavin adenine dinucleotide binding"/>
    <property type="evidence" value="ECO:0007669"/>
    <property type="project" value="UniProtKB-UniRule"/>
</dbReference>
<dbReference type="GO" id="GO:0030488">
    <property type="term" value="P:tRNA methylation"/>
    <property type="evidence" value="ECO:0007669"/>
    <property type="project" value="TreeGrafter"/>
</dbReference>
<dbReference type="GO" id="GO:0002098">
    <property type="term" value="P:tRNA wobble uridine modification"/>
    <property type="evidence" value="ECO:0007669"/>
    <property type="project" value="InterPro"/>
</dbReference>
<dbReference type="FunFam" id="1.10.10.1800:FF:000001">
    <property type="entry name" value="tRNA uridine 5-carboxymethylaminomethyl modification enzyme MnmG"/>
    <property type="match status" value="1"/>
</dbReference>
<dbReference type="FunFam" id="1.10.150.570:FF:000001">
    <property type="entry name" value="tRNA uridine 5-carboxymethylaminomethyl modification enzyme MnmG"/>
    <property type="match status" value="1"/>
</dbReference>
<dbReference type="FunFam" id="3.50.50.60:FF:000002">
    <property type="entry name" value="tRNA uridine 5-carboxymethylaminomethyl modification enzyme MnmG"/>
    <property type="match status" value="1"/>
</dbReference>
<dbReference type="FunFam" id="3.50.50.60:FF:000010">
    <property type="entry name" value="tRNA uridine 5-carboxymethylaminomethyl modification enzyme MnmG"/>
    <property type="match status" value="1"/>
</dbReference>
<dbReference type="Gene3D" id="3.50.50.60">
    <property type="entry name" value="FAD/NAD(P)-binding domain"/>
    <property type="match status" value="2"/>
</dbReference>
<dbReference type="Gene3D" id="1.10.150.570">
    <property type="entry name" value="GidA associated domain, C-terminal subdomain"/>
    <property type="match status" value="1"/>
</dbReference>
<dbReference type="Gene3D" id="1.10.10.1800">
    <property type="entry name" value="tRNA uridine 5-carboxymethylaminomethyl modification enzyme MnmG/GidA"/>
    <property type="match status" value="1"/>
</dbReference>
<dbReference type="HAMAP" id="MF_00129">
    <property type="entry name" value="MnmG_GidA"/>
    <property type="match status" value="1"/>
</dbReference>
<dbReference type="InterPro" id="IPR036188">
    <property type="entry name" value="FAD/NAD-bd_sf"/>
</dbReference>
<dbReference type="InterPro" id="IPR049312">
    <property type="entry name" value="GIDA_C_N"/>
</dbReference>
<dbReference type="InterPro" id="IPR004416">
    <property type="entry name" value="MnmG"/>
</dbReference>
<dbReference type="InterPro" id="IPR002218">
    <property type="entry name" value="MnmG-rel"/>
</dbReference>
<dbReference type="InterPro" id="IPR020595">
    <property type="entry name" value="MnmG-rel_CS"/>
</dbReference>
<dbReference type="InterPro" id="IPR026904">
    <property type="entry name" value="MnmG_C"/>
</dbReference>
<dbReference type="InterPro" id="IPR047001">
    <property type="entry name" value="MnmG_C_subdom"/>
</dbReference>
<dbReference type="InterPro" id="IPR044920">
    <property type="entry name" value="MnmG_C_subdom_sf"/>
</dbReference>
<dbReference type="InterPro" id="IPR040131">
    <property type="entry name" value="MnmG_N"/>
</dbReference>
<dbReference type="NCBIfam" id="TIGR00136">
    <property type="entry name" value="mnmG_gidA"/>
    <property type="match status" value="1"/>
</dbReference>
<dbReference type="PANTHER" id="PTHR11806">
    <property type="entry name" value="GLUCOSE INHIBITED DIVISION PROTEIN A"/>
    <property type="match status" value="1"/>
</dbReference>
<dbReference type="PANTHER" id="PTHR11806:SF0">
    <property type="entry name" value="PROTEIN MTO1 HOMOLOG, MITOCHONDRIAL"/>
    <property type="match status" value="1"/>
</dbReference>
<dbReference type="Pfam" id="PF01134">
    <property type="entry name" value="GIDA"/>
    <property type="match status" value="1"/>
</dbReference>
<dbReference type="Pfam" id="PF21680">
    <property type="entry name" value="GIDA_C_1st"/>
    <property type="match status" value="1"/>
</dbReference>
<dbReference type="Pfam" id="PF13932">
    <property type="entry name" value="SAM_GIDA_C"/>
    <property type="match status" value="1"/>
</dbReference>
<dbReference type="SMART" id="SM01228">
    <property type="entry name" value="GIDA_assoc_3"/>
    <property type="match status" value="1"/>
</dbReference>
<dbReference type="SUPFAM" id="SSF51905">
    <property type="entry name" value="FAD/NAD(P)-binding domain"/>
    <property type="match status" value="1"/>
</dbReference>
<dbReference type="PROSITE" id="PS01280">
    <property type="entry name" value="GIDA_1"/>
    <property type="match status" value="1"/>
</dbReference>
<dbReference type="PROSITE" id="PS01281">
    <property type="entry name" value="GIDA_2"/>
    <property type="match status" value="1"/>
</dbReference>
<feature type="chain" id="PRO_0000345333" description="tRNA uridine 5-carboxymethylaminomethyl modification enzyme MnmG">
    <location>
        <begin position="1"/>
        <end position="629"/>
    </location>
</feature>
<feature type="binding site" evidence="1">
    <location>
        <begin position="13"/>
        <end position="18"/>
    </location>
    <ligand>
        <name>FAD</name>
        <dbReference type="ChEBI" id="CHEBI:57692"/>
    </ligand>
</feature>
<feature type="binding site" evidence="1">
    <location>
        <position position="125"/>
    </location>
    <ligand>
        <name>FAD</name>
        <dbReference type="ChEBI" id="CHEBI:57692"/>
    </ligand>
</feature>
<feature type="binding site" evidence="1">
    <location>
        <position position="180"/>
    </location>
    <ligand>
        <name>FAD</name>
        <dbReference type="ChEBI" id="CHEBI:57692"/>
    </ligand>
</feature>
<feature type="binding site" evidence="1">
    <location>
        <begin position="273"/>
        <end position="287"/>
    </location>
    <ligand>
        <name>NAD(+)</name>
        <dbReference type="ChEBI" id="CHEBI:57540"/>
    </ligand>
</feature>
<feature type="binding site" evidence="1">
    <location>
        <position position="370"/>
    </location>
    <ligand>
        <name>FAD</name>
        <dbReference type="ChEBI" id="CHEBI:57692"/>
    </ligand>
</feature>
<keyword id="KW-0963">Cytoplasm</keyword>
<keyword id="KW-0274">FAD</keyword>
<keyword id="KW-0285">Flavoprotein</keyword>
<keyword id="KW-0520">NAD</keyword>
<keyword id="KW-0819">tRNA processing</keyword>
<protein>
    <recommendedName>
        <fullName evidence="1">tRNA uridine 5-carboxymethylaminomethyl modification enzyme MnmG</fullName>
    </recommendedName>
    <alternativeName>
        <fullName evidence="1">Glucose-inhibited division protein A</fullName>
    </alternativeName>
</protein>
<name>MNMG_SHIF8</name>